<organism>
    <name type="scientific">Cereibacter sphaeroides (strain KD131 / KCTC 12085)</name>
    <name type="common">Rhodobacter sphaeroides</name>
    <dbReference type="NCBI Taxonomy" id="557760"/>
    <lineage>
        <taxon>Bacteria</taxon>
        <taxon>Pseudomonadati</taxon>
        <taxon>Pseudomonadota</taxon>
        <taxon>Alphaproteobacteria</taxon>
        <taxon>Rhodobacterales</taxon>
        <taxon>Paracoccaceae</taxon>
        <taxon>Cereibacter</taxon>
    </lineage>
</organism>
<name>BCHB_CERSK</name>
<comment type="function">
    <text evidence="1">Component of the dark-operative protochlorophyllide reductase (DPOR) that uses Mg-ATP and reduced ferredoxin to reduce ring D of protochlorophyllide (Pchlide) to form chlorophyllide a (Chlide). This reaction is light-independent. The NB-protein (BchN-BchB) is the catalytic component of the complex.</text>
</comment>
<comment type="catalytic activity">
    <reaction evidence="1">
        <text>chlorophyllide a + oxidized 2[4Fe-4S]-[ferredoxin] + 2 ADP + 2 phosphate = protochlorophyllide a + reduced 2[4Fe-4S]-[ferredoxin] + 2 ATP + 2 H2O</text>
        <dbReference type="Rhea" id="RHEA:28202"/>
        <dbReference type="Rhea" id="RHEA-COMP:10002"/>
        <dbReference type="Rhea" id="RHEA-COMP:10004"/>
        <dbReference type="ChEBI" id="CHEBI:15377"/>
        <dbReference type="ChEBI" id="CHEBI:30616"/>
        <dbReference type="ChEBI" id="CHEBI:33722"/>
        <dbReference type="ChEBI" id="CHEBI:33723"/>
        <dbReference type="ChEBI" id="CHEBI:43474"/>
        <dbReference type="ChEBI" id="CHEBI:83348"/>
        <dbReference type="ChEBI" id="CHEBI:83350"/>
        <dbReference type="ChEBI" id="CHEBI:456216"/>
        <dbReference type="EC" id="1.3.7.7"/>
    </reaction>
</comment>
<comment type="cofactor">
    <cofactor evidence="1">
        <name>[4Fe-4S] cluster</name>
        <dbReference type="ChEBI" id="CHEBI:49883"/>
    </cofactor>
    <text evidence="1">Binds 1 [4Fe-4S] cluster per heterodimer. The cluster is bound at the heterodimer interface by residues from both subunits.</text>
</comment>
<comment type="pathway">
    <text evidence="1">Porphyrin-containing compound metabolism; bacteriochlorophyll biosynthesis (light-independent).</text>
</comment>
<comment type="subunit">
    <text evidence="1">Protochlorophyllide reductase is composed of three subunits; BchL, BchN and BchB. Forms a heterotetramer of two BchB and two BchN subunits.</text>
</comment>
<comment type="similarity">
    <text evidence="1">Belongs to the ChlB/BchB/BchZ family.</text>
</comment>
<gene>
    <name evidence="1" type="primary">bchB</name>
    <name type="ordered locus">RSKD131_1612</name>
</gene>
<reference key="1">
    <citation type="journal article" date="2009" name="J. Bacteriol.">
        <title>Complete genome sequence of Rhodobacter sphaeroides KD131.</title>
        <authorList>
            <person name="Lim S.-K."/>
            <person name="Kim S.J."/>
            <person name="Cha S.H."/>
            <person name="Oh Y.-K."/>
            <person name="Rhee H.-J."/>
            <person name="Kim M.-S."/>
            <person name="Lee J.K."/>
        </authorList>
    </citation>
    <scope>NUCLEOTIDE SEQUENCE [LARGE SCALE GENOMIC DNA]</scope>
    <source>
        <strain>KD131 / KCTC 12085</strain>
    </source>
</reference>
<accession>B9KK25</accession>
<keyword id="KW-0004">4Fe-4S</keyword>
<keyword id="KW-0067">ATP-binding</keyword>
<keyword id="KW-0077">Bacteriochlorophyll biosynthesis</keyword>
<keyword id="KW-0149">Chlorophyll biosynthesis</keyword>
<keyword id="KW-0408">Iron</keyword>
<keyword id="KW-0411">Iron-sulfur</keyword>
<keyword id="KW-0479">Metal-binding</keyword>
<keyword id="KW-0547">Nucleotide-binding</keyword>
<keyword id="KW-0560">Oxidoreductase</keyword>
<keyword id="KW-0602">Photosynthesis</keyword>
<proteinExistence type="inferred from homology"/>
<sequence length="536" mass="58305">MKLTLWTYEGPPHVGAMRVATGMTGMHYVLHAPQGDTYADLLFTMIERRGKRPPVSYTTFQARDLGSDTAELFQSACRDAYERFQPQAIMVGSSCTAELIQDDTGGLADALSLPVPVVHLELPSYQRKENFGADESFLQICRKLARPMERTEKVSCNLLGPTALGFRHRDDILEVTRLLEGMGIAVNAVAPMGASPADIARLGAAHFNVLLYPETGESAARWAEKTLKQPYTKTVPIGVGATRDFVAEVAALAGVAPVADDSRLRQPWWSASVDSTYLTGKRVFLFGDATHVIAAARVARDEMGFEVVGMGCYNREFARPMRAAAKGYGLEALVTDDYLEVEEAIQALAPELILGTQMERHIAKRLGIPCAVISAPVHVQDFPARYSPQMGFEGANVLFDTWIHPLTMGLEEHLLTMFREDFEFHDEAGPSHHGGKAVPASAPRADEAAEALPATGAETAEGGSIPPEAVPPAAAAAAEAPAGEIVWLTDAERELKKIPFFVRGKARRNTEKFAAEKGLTRISIETLYEAKAHYAR</sequence>
<evidence type="ECO:0000255" key="1">
    <source>
        <dbReference type="HAMAP-Rule" id="MF_00353"/>
    </source>
</evidence>
<evidence type="ECO:0000256" key="2">
    <source>
        <dbReference type="SAM" id="MobiDB-lite"/>
    </source>
</evidence>
<dbReference type="EC" id="1.3.7.7" evidence="1"/>
<dbReference type="EMBL" id="CP001150">
    <property type="protein sequence ID" value="ACM01472.1"/>
    <property type="molecule type" value="Genomic_DNA"/>
</dbReference>
<dbReference type="RefSeq" id="WP_015920855.1">
    <property type="nucleotide sequence ID" value="NC_011963.1"/>
</dbReference>
<dbReference type="SMR" id="B9KK25"/>
<dbReference type="GeneID" id="67447019"/>
<dbReference type="KEGG" id="rsk:RSKD131_1612"/>
<dbReference type="HOGENOM" id="CLU_025470_0_0_5"/>
<dbReference type="UniPathway" id="UPA00671"/>
<dbReference type="GO" id="GO:0051539">
    <property type="term" value="F:4 iron, 4 sulfur cluster binding"/>
    <property type="evidence" value="ECO:0007669"/>
    <property type="project" value="UniProtKB-UniRule"/>
</dbReference>
<dbReference type="GO" id="GO:0005524">
    <property type="term" value="F:ATP binding"/>
    <property type="evidence" value="ECO:0007669"/>
    <property type="project" value="UniProtKB-UniRule"/>
</dbReference>
<dbReference type="GO" id="GO:0046872">
    <property type="term" value="F:metal ion binding"/>
    <property type="evidence" value="ECO:0007669"/>
    <property type="project" value="UniProtKB-KW"/>
</dbReference>
<dbReference type="GO" id="GO:0016730">
    <property type="term" value="F:oxidoreductase activity, acting on iron-sulfur proteins as donors"/>
    <property type="evidence" value="ECO:0007669"/>
    <property type="project" value="InterPro"/>
</dbReference>
<dbReference type="GO" id="GO:0016636">
    <property type="term" value="F:oxidoreductase activity, acting on the CH-CH group of donors, iron-sulfur protein as acceptor"/>
    <property type="evidence" value="ECO:0007669"/>
    <property type="project" value="UniProtKB-UniRule"/>
</dbReference>
<dbReference type="GO" id="GO:0036070">
    <property type="term" value="P:light-independent bacteriochlorophyll biosynthetic process"/>
    <property type="evidence" value="ECO:0007669"/>
    <property type="project" value="UniProtKB-UniRule"/>
</dbReference>
<dbReference type="GO" id="GO:0019685">
    <property type="term" value="P:photosynthesis, dark reaction"/>
    <property type="evidence" value="ECO:0007669"/>
    <property type="project" value="InterPro"/>
</dbReference>
<dbReference type="Gene3D" id="1.20.89.20">
    <property type="match status" value="1"/>
</dbReference>
<dbReference type="Gene3D" id="3.40.50.1980">
    <property type="entry name" value="Nitrogenase molybdenum iron protein domain"/>
    <property type="match status" value="3"/>
</dbReference>
<dbReference type="Gene3D" id="1.10.8.550">
    <property type="entry name" value="Proto-chlorophyllide reductase 57 kD subunit B"/>
    <property type="match status" value="1"/>
</dbReference>
<dbReference type="HAMAP" id="MF_00353">
    <property type="entry name" value="ChlB_BchB"/>
    <property type="match status" value="1"/>
</dbReference>
<dbReference type="InterPro" id="IPR050152">
    <property type="entry name" value="ChlB/BchB/BchZ"/>
</dbReference>
<dbReference type="InterPro" id="IPR013580">
    <property type="entry name" value="LI-POR_suB-like_C"/>
</dbReference>
<dbReference type="InterPro" id="IPR000510">
    <property type="entry name" value="Nase/OxRdtase_comp1"/>
</dbReference>
<dbReference type="InterPro" id="IPR042298">
    <property type="entry name" value="P-CP_red_C"/>
</dbReference>
<dbReference type="InterPro" id="IPR005969">
    <property type="entry name" value="Protochl_reductB"/>
</dbReference>
<dbReference type="InterPro" id="IPR016209">
    <property type="entry name" value="Protochlorophyllide_Rdtase"/>
</dbReference>
<dbReference type="NCBIfam" id="TIGR01278">
    <property type="entry name" value="DPOR_BchB"/>
    <property type="match status" value="1"/>
</dbReference>
<dbReference type="PANTHER" id="PTHR33712">
    <property type="entry name" value="LIGHT-INDEPENDENT PROTOCHLOROPHYLLIDE REDUCTASE SUBUNIT B"/>
    <property type="match status" value="1"/>
</dbReference>
<dbReference type="PANTHER" id="PTHR33712:SF7">
    <property type="entry name" value="LIGHT-INDEPENDENT PROTOCHLOROPHYLLIDE REDUCTASE SUBUNIT B"/>
    <property type="match status" value="1"/>
</dbReference>
<dbReference type="Pfam" id="PF00148">
    <property type="entry name" value="Oxidored_nitro"/>
    <property type="match status" value="1"/>
</dbReference>
<dbReference type="Pfam" id="PF08369">
    <property type="entry name" value="PCP_red"/>
    <property type="match status" value="1"/>
</dbReference>
<dbReference type="PIRSF" id="PIRSF000163">
    <property type="entry name" value="PCP_ChlB"/>
    <property type="match status" value="1"/>
</dbReference>
<dbReference type="SUPFAM" id="SSF53807">
    <property type="entry name" value="Helical backbone' metal receptor"/>
    <property type="match status" value="1"/>
</dbReference>
<protein>
    <recommendedName>
        <fullName evidence="1">Light-independent protochlorophyllide reductase subunit B</fullName>
        <shortName evidence="1">DPOR subunit B</shortName>
        <shortName evidence="1">LI-POR subunit B</shortName>
        <ecNumber evidence="1">1.3.7.7</ecNumber>
    </recommendedName>
</protein>
<feature type="chain" id="PRO_1000133425" description="Light-independent protochlorophyllide reductase subunit B">
    <location>
        <begin position="1"/>
        <end position="536"/>
    </location>
</feature>
<feature type="region of interest" description="Disordered" evidence="2">
    <location>
        <begin position="426"/>
        <end position="448"/>
    </location>
</feature>
<feature type="active site" description="Proton donor" evidence="1">
    <location>
        <position position="274"/>
    </location>
</feature>
<feature type="binding site" evidence="1">
    <location>
        <position position="36"/>
    </location>
    <ligand>
        <name>[4Fe-4S] cluster</name>
        <dbReference type="ChEBI" id="CHEBI:49883"/>
        <note>ligand shared with heterodimeric partner</note>
    </ligand>
</feature>
<feature type="binding site" evidence="1">
    <location>
        <begin position="409"/>
        <end position="410"/>
    </location>
    <ligand>
        <name>substrate</name>
    </ligand>
</feature>